<reference key="1">
    <citation type="journal article" date="2006" name="Proc. Natl. Acad. Sci. U.S.A.">
        <title>Genome reduction in Leptospira borgpetersenii reflects limited transmission potential.</title>
        <authorList>
            <person name="Bulach D.M."/>
            <person name="Zuerner R.L."/>
            <person name="Wilson P."/>
            <person name="Seemann T."/>
            <person name="McGrath A."/>
            <person name="Cullen P.A."/>
            <person name="Davis J."/>
            <person name="Johnson M."/>
            <person name="Kuczek E."/>
            <person name="Alt D.P."/>
            <person name="Peterson-Burch B."/>
            <person name="Coppel R.L."/>
            <person name="Rood J.I."/>
            <person name="Davies J.K."/>
            <person name="Adler B."/>
        </authorList>
    </citation>
    <scope>NUCLEOTIDE SEQUENCE [LARGE SCALE GENOMIC DNA]</scope>
    <source>
        <strain>JB197</strain>
    </source>
</reference>
<name>Y597_LEPBJ</name>
<proteinExistence type="inferred from homology"/>
<dbReference type="EMBL" id="CP000350">
    <property type="protein sequence ID" value="ABJ75279.1"/>
    <property type="molecule type" value="Genomic_DNA"/>
</dbReference>
<dbReference type="RefSeq" id="WP_002752840.1">
    <property type="nucleotide sequence ID" value="NC_008510.1"/>
</dbReference>
<dbReference type="SMR" id="Q04UZ1"/>
<dbReference type="KEGG" id="lbj:LBJ_0597"/>
<dbReference type="HOGENOM" id="CLU_106166_0_0_12"/>
<dbReference type="Proteomes" id="UP000000656">
    <property type="component" value="Chromosome 1"/>
</dbReference>
<dbReference type="GO" id="GO:0005886">
    <property type="term" value="C:plasma membrane"/>
    <property type="evidence" value="ECO:0007669"/>
    <property type="project" value="UniProtKB-SubCell"/>
</dbReference>
<dbReference type="CDD" id="cd16381">
    <property type="entry name" value="YitT_C_like_1"/>
    <property type="match status" value="1"/>
</dbReference>
<dbReference type="Gene3D" id="3.30.70.120">
    <property type="match status" value="1"/>
</dbReference>
<dbReference type="HAMAP" id="MF_01515">
    <property type="entry name" value="UPF0316"/>
    <property type="match status" value="1"/>
</dbReference>
<dbReference type="InterPro" id="IPR019264">
    <property type="entry name" value="DUF2179"/>
</dbReference>
<dbReference type="InterPro" id="IPR044035">
    <property type="entry name" value="DUF5698"/>
</dbReference>
<dbReference type="InterPro" id="IPR015867">
    <property type="entry name" value="N-reg_PII/ATP_PRibTrfase_C"/>
</dbReference>
<dbReference type="InterPro" id="IPR022930">
    <property type="entry name" value="UPF0316"/>
</dbReference>
<dbReference type="NCBIfam" id="NF003191">
    <property type="entry name" value="PRK04164.1-2"/>
    <property type="match status" value="1"/>
</dbReference>
<dbReference type="PANTHER" id="PTHR40060">
    <property type="entry name" value="UPF0316 PROTEIN YEBE"/>
    <property type="match status" value="1"/>
</dbReference>
<dbReference type="PANTHER" id="PTHR40060:SF1">
    <property type="entry name" value="UPF0316 PROTEIN YEBE"/>
    <property type="match status" value="1"/>
</dbReference>
<dbReference type="Pfam" id="PF10035">
    <property type="entry name" value="DUF2179"/>
    <property type="match status" value="1"/>
</dbReference>
<dbReference type="Pfam" id="PF18955">
    <property type="entry name" value="DUF5698"/>
    <property type="match status" value="1"/>
</dbReference>
<feature type="chain" id="PRO_0000292362" description="UPF0316 protein LBJ_0597">
    <location>
        <begin position="1"/>
        <end position="196"/>
    </location>
</feature>
<feature type="transmembrane region" description="Helical" evidence="1">
    <location>
        <begin position="12"/>
        <end position="32"/>
    </location>
</feature>
<feature type="transmembrane region" description="Helical" evidence="1">
    <location>
        <begin position="44"/>
        <end position="64"/>
    </location>
</feature>
<feature type="transmembrane region" description="Helical" evidence="1">
    <location>
        <begin position="70"/>
        <end position="90"/>
    </location>
</feature>
<organism>
    <name type="scientific">Leptospira borgpetersenii serovar Hardjo-bovis (strain JB197)</name>
    <dbReference type="NCBI Taxonomy" id="355277"/>
    <lineage>
        <taxon>Bacteria</taxon>
        <taxon>Pseudomonadati</taxon>
        <taxon>Spirochaetota</taxon>
        <taxon>Spirochaetia</taxon>
        <taxon>Leptospirales</taxon>
        <taxon>Leptospiraceae</taxon>
        <taxon>Leptospira</taxon>
    </lineage>
</organism>
<comment type="subcellular location">
    <subcellularLocation>
        <location evidence="1">Cell membrane</location>
        <topology evidence="1">Multi-pass membrane protein</topology>
    </subcellularLocation>
</comment>
<comment type="similarity">
    <text evidence="1">Belongs to the UPF0316 family.</text>
</comment>
<keyword id="KW-1003">Cell membrane</keyword>
<keyword id="KW-0472">Membrane</keyword>
<keyword id="KW-0812">Transmembrane</keyword>
<keyword id="KW-1133">Transmembrane helix</keyword>
<gene>
    <name type="ordered locus">LBJ_0597</name>
</gene>
<accession>Q04UZ1</accession>
<protein>
    <recommendedName>
        <fullName evidence="1">UPF0316 protein LBJ_0597</fullName>
    </recommendedName>
</protein>
<evidence type="ECO:0000255" key="1">
    <source>
        <dbReference type="HAMAP-Rule" id="MF_01515"/>
    </source>
</evidence>
<sequence>MELNPGNPIFDYCVLPCFIFLARVTDVSIGTIRVILLTREKKVIAASLGFLEVLLWVIVITQVIKNLNNALCYLAYAGGFAAGTFIGMILEEKLAIGFSLLRIISPRNGDEIANKLSEAGYGVTTMNGQGSRGPVKIVFTVLKRKKIGQAMTIVKSVEPDVFYSIENARSTNTAVSEDSPGLLRIGILEKILKVRK</sequence>